<evidence type="ECO:0000250" key="1">
    <source>
        <dbReference type="UniProtKB" id="P27467"/>
    </source>
</evidence>
<evidence type="ECO:0000250" key="2">
    <source>
        <dbReference type="UniProtKB" id="P28026"/>
    </source>
</evidence>
<evidence type="ECO:0000250" key="3">
    <source>
        <dbReference type="UniProtKB" id="P56704"/>
    </source>
</evidence>
<evidence type="ECO:0000255" key="4"/>
<evidence type="ECO:0000269" key="5">
    <source>
    </source>
</evidence>
<evidence type="ECO:0000305" key="6"/>
<organism>
    <name type="scientific">Mus musculus</name>
    <name type="common">Mouse</name>
    <dbReference type="NCBI Taxonomy" id="10090"/>
    <lineage>
        <taxon>Eukaryota</taxon>
        <taxon>Metazoa</taxon>
        <taxon>Chordata</taxon>
        <taxon>Craniata</taxon>
        <taxon>Vertebrata</taxon>
        <taxon>Euteleostomi</taxon>
        <taxon>Mammalia</taxon>
        <taxon>Eutheria</taxon>
        <taxon>Euarchontoglires</taxon>
        <taxon>Glires</taxon>
        <taxon>Rodentia</taxon>
        <taxon>Myomorpha</taxon>
        <taxon>Muroidea</taxon>
        <taxon>Muridae</taxon>
        <taxon>Murinae</taxon>
        <taxon>Mus</taxon>
        <taxon>Mus</taxon>
    </lineage>
</organism>
<accession>P22726</accession>
<accession>Q91XF5</accession>
<protein>
    <recommendedName>
        <fullName>Protein Wnt-5b</fullName>
    </recommendedName>
</protein>
<reference key="1">
    <citation type="journal article" date="1990" name="Genes Dev.">
        <title>Expression of multiple novel Wnt-1/int-1-related genes during fetal and adult mouse development.</title>
        <authorList>
            <person name="Gavin B.J."/>
            <person name="McMahon J.A."/>
            <person name="McMahon A.P."/>
        </authorList>
    </citation>
    <scope>NUCLEOTIDE SEQUENCE [MRNA]</scope>
</reference>
<reference key="2">
    <citation type="journal article" date="2004" name="Genome Res.">
        <title>The status, quality, and expansion of the NIH full-length cDNA project: the Mammalian Gene Collection (MGC).</title>
        <authorList>
            <consortium name="The MGC Project Team"/>
        </authorList>
    </citation>
    <scope>NUCLEOTIDE SEQUENCE [LARGE SCALE MRNA]</scope>
    <source>
        <strain>FVB/N-3</strain>
        <tissue>Liver</tissue>
        <tissue>Mammary gland</tissue>
    </source>
</reference>
<reference key="3">
    <citation type="journal article" date="2000" name="Eur. J. Biochem.">
        <title>The evolutionarily conserved porcupine gene family is involved in the processing of the Wnt family.</title>
        <authorList>
            <person name="Tanaka K."/>
            <person name="Okabayashi H."/>
            <person name="Asashima M."/>
            <person name="Perrimon N."/>
            <person name="Kadowaki T."/>
        </authorList>
    </citation>
    <scope>INTERACTION WITH PORCN</scope>
</reference>
<proteinExistence type="evidence at protein level"/>
<gene>
    <name type="primary">Wnt5b</name>
    <name type="synonym">Wnt-5b</name>
</gene>
<comment type="function">
    <text>Ligand for members of the frizzled family of seven transmembrane receptors. Probable developmental protein. May be a signaling molecule which affects the development of discrete regions of tissues. Is likely to signal over only few cell diameters.</text>
</comment>
<comment type="subunit">
    <text evidence="5">Interacts with PORCN.</text>
</comment>
<comment type="subcellular location">
    <subcellularLocation>
        <location>Secreted</location>
        <location>Extracellular space</location>
        <location>Extracellular matrix</location>
    </subcellularLocation>
</comment>
<comment type="PTM">
    <text evidence="1 3">Palmitoleoylation is required for efficient binding to frizzled receptors. Depalmitoleoylation leads to Wnt signaling pathway inhibition.</text>
</comment>
<comment type="similarity">
    <text evidence="6">Belongs to the Wnt family.</text>
</comment>
<comment type="sequence caution" evidence="6">
    <conflict type="erroneous initiation">
        <sequence resource="EMBL-CDS" id="AAA40568"/>
    </conflict>
</comment>
<comment type="sequence caution" evidence="6">
    <conflict type="erroneous initiation">
        <sequence resource="EMBL-CDS" id="AAH10775"/>
    </conflict>
</comment>
<feature type="signal peptide" evidence="4">
    <location>
        <begin position="1"/>
        <end position="17"/>
    </location>
</feature>
<feature type="chain" id="PRO_0000041435" description="Protein Wnt-5b">
    <location>
        <begin position="18"/>
        <end position="359"/>
    </location>
</feature>
<feature type="lipid moiety-binding region" description="O-palmitoleoyl serine; by PORCN" evidence="3">
    <location>
        <position position="223"/>
    </location>
</feature>
<feature type="glycosylation site" description="N-linked (GlcNAc...) asparagine" evidence="4">
    <location>
        <position position="93"/>
    </location>
</feature>
<feature type="glycosylation site" description="N-linked (GlcNAc...) asparagine" evidence="4">
    <location>
        <position position="99"/>
    </location>
</feature>
<feature type="glycosylation site" description="N-linked (GlcNAc...) asparagine" evidence="4">
    <location>
        <position position="291"/>
    </location>
</feature>
<feature type="glycosylation site" description="N-linked (GlcNAc...) asparagine" evidence="4">
    <location>
        <position position="305"/>
    </location>
</feature>
<feature type="disulfide bond" evidence="2">
    <location>
        <begin position="83"/>
        <end position="94"/>
    </location>
</feature>
<feature type="disulfide bond" evidence="2">
    <location>
        <begin position="133"/>
        <end position="141"/>
    </location>
</feature>
<feature type="disulfide bond" evidence="2">
    <location>
        <begin position="143"/>
        <end position="161"/>
    </location>
</feature>
<feature type="disulfide bond" evidence="2">
    <location>
        <begin position="217"/>
        <end position="231"/>
    </location>
</feature>
<feature type="disulfide bond" evidence="2">
    <location>
        <begin position="219"/>
        <end position="226"/>
    </location>
</feature>
<feature type="disulfide bond" evidence="2">
    <location>
        <begin position="288"/>
        <end position="319"/>
    </location>
</feature>
<feature type="disulfide bond" evidence="2">
    <location>
        <begin position="304"/>
        <end position="314"/>
    </location>
</feature>
<feature type="disulfide bond" evidence="2">
    <location>
        <begin position="318"/>
        <end position="358"/>
    </location>
</feature>
<feature type="disulfide bond" evidence="2">
    <location>
        <begin position="334"/>
        <end position="349"/>
    </location>
</feature>
<feature type="disulfide bond" evidence="2">
    <location>
        <begin position="336"/>
        <end position="346"/>
    </location>
</feature>
<feature type="disulfide bond" evidence="2">
    <location>
        <begin position="341"/>
        <end position="342"/>
    </location>
</feature>
<sequence>MPSLLLVVVAALLSSWAQLLTDANSWWSLALNPVQRPEMFIIGAQPVCSQLPGLSPGQRKLCQLYQEHMSYIGEGAKTGIRECQHQFRQRRWNCSTVDNTSVFGRVMQIGSRETAFTYAVSAAGVVNAISRACREGELSTCGCSRAARPKDLPRDWLWGGCGDNVEYGYRFAKEFVDAREREKNFAKGSEEQGRALMNLQNNEAGRRAVYKMADVACKCHGVSGSCSLKTCWLQLAEFRKVGDRLKEKYDSAAAMRITRQGKLELANSRFNQPTPEDLVYVDPSPDYCLRNETTGSLGTQGRLCNKTSEGMDGCELMCCGRGYDRFKSVQVERCHCRFHWCCFVRCKKCTEVVDQYVCK</sequence>
<keyword id="KW-0217">Developmental protein</keyword>
<keyword id="KW-1015">Disulfide bond</keyword>
<keyword id="KW-0272">Extracellular matrix</keyword>
<keyword id="KW-0325">Glycoprotein</keyword>
<keyword id="KW-0449">Lipoprotein</keyword>
<keyword id="KW-1185">Reference proteome</keyword>
<keyword id="KW-0964">Secreted</keyword>
<keyword id="KW-0732">Signal</keyword>
<keyword id="KW-0879">Wnt signaling pathway</keyword>
<name>WNT5B_MOUSE</name>
<dbReference type="EMBL" id="M89799">
    <property type="protein sequence ID" value="AAA40568.1"/>
    <property type="status" value="ALT_INIT"/>
    <property type="molecule type" value="mRNA"/>
</dbReference>
<dbReference type="EMBL" id="BC010775">
    <property type="protein sequence ID" value="AAH10775.1"/>
    <property type="status" value="ALT_INIT"/>
    <property type="molecule type" value="mRNA"/>
</dbReference>
<dbReference type="EMBL" id="BC051406">
    <property type="protein sequence ID" value="AAH51406.1"/>
    <property type="molecule type" value="mRNA"/>
</dbReference>
<dbReference type="CCDS" id="CCDS20474.2"/>
<dbReference type="PIR" id="E36470">
    <property type="entry name" value="E36470"/>
</dbReference>
<dbReference type="RefSeq" id="NP_001258686.1">
    <property type="nucleotide sequence ID" value="NM_001271757.2"/>
</dbReference>
<dbReference type="RefSeq" id="NP_001258687.1">
    <property type="nucleotide sequence ID" value="NM_001271758.2"/>
</dbReference>
<dbReference type="RefSeq" id="NP_001397434.1">
    <property type="nucleotide sequence ID" value="NM_001410505.1"/>
</dbReference>
<dbReference type="RefSeq" id="NP_033551.2">
    <property type="nucleotide sequence ID" value="NM_009525.4"/>
</dbReference>
<dbReference type="RefSeq" id="XP_006505987.1">
    <property type="nucleotide sequence ID" value="XM_006505924.1"/>
</dbReference>
<dbReference type="SMR" id="P22726"/>
<dbReference type="BioGRID" id="204578">
    <property type="interactions" value="1"/>
</dbReference>
<dbReference type="FunCoup" id="P22726">
    <property type="interactions" value="466"/>
</dbReference>
<dbReference type="STRING" id="10090.ENSMUSP00000137065"/>
<dbReference type="GlyCosmos" id="P22726">
    <property type="glycosylation" value="4 sites, No reported glycans"/>
</dbReference>
<dbReference type="GlyGen" id="P22726">
    <property type="glycosylation" value="4 sites, 1 N-linked glycan (1 site)"/>
</dbReference>
<dbReference type="iPTMnet" id="P22726"/>
<dbReference type="PhosphoSitePlus" id="P22726"/>
<dbReference type="PaxDb" id="10090-ENSMUSP00000112448"/>
<dbReference type="ProteomicsDB" id="297855"/>
<dbReference type="Antibodypedia" id="10357">
    <property type="antibodies" value="246 antibodies from 31 providers"/>
</dbReference>
<dbReference type="DNASU" id="22419"/>
<dbReference type="Ensembl" id="ENSMUST00000117171.8">
    <property type="protein sequence ID" value="ENSMUSP00000113188.2"/>
    <property type="gene ID" value="ENSMUSG00000030170.15"/>
</dbReference>
<dbReference type="Ensembl" id="ENSMUST00000178696.8">
    <property type="protein sequence ID" value="ENSMUSP00000137065.2"/>
    <property type="gene ID" value="ENSMUSG00000030170.15"/>
</dbReference>
<dbReference type="GeneID" id="22419"/>
<dbReference type="KEGG" id="mmu:22419"/>
<dbReference type="UCSC" id="uc009dmg.3">
    <property type="organism name" value="mouse"/>
</dbReference>
<dbReference type="AGR" id="MGI:98959"/>
<dbReference type="CTD" id="81029"/>
<dbReference type="MGI" id="MGI:98959">
    <property type="gene designation" value="Wnt5b"/>
</dbReference>
<dbReference type="VEuPathDB" id="HostDB:ENSMUSG00000030170"/>
<dbReference type="eggNOG" id="KOG3913">
    <property type="taxonomic scope" value="Eukaryota"/>
</dbReference>
<dbReference type="GeneTree" id="ENSGT00940000157617"/>
<dbReference type="HOGENOM" id="CLU_033039_0_1_1"/>
<dbReference type="InParanoid" id="P22726"/>
<dbReference type="OMA" id="IQVERCH"/>
<dbReference type="PhylomeDB" id="P22726"/>
<dbReference type="TreeFam" id="TF105310"/>
<dbReference type="Reactome" id="R-MMU-3238698">
    <property type="pathway name" value="WNT ligand biogenesis and trafficking"/>
</dbReference>
<dbReference type="Reactome" id="R-MMU-4086400">
    <property type="pathway name" value="PCP/CE pathway"/>
</dbReference>
<dbReference type="BioGRID-ORCS" id="22419">
    <property type="hits" value="3 hits in 78 CRISPR screens"/>
</dbReference>
<dbReference type="ChiTaRS" id="Wnt5b">
    <property type="organism name" value="mouse"/>
</dbReference>
<dbReference type="PRO" id="PR:P22726"/>
<dbReference type="Proteomes" id="UP000000589">
    <property type="component" value="Chromosome 6"/>
</dbReference>
<dbReference type="RNAct" id="P22726">
    <property type="molecule type" value="protein"/>
</dbReference>
<dbReference type="Bgee" id="ENSMUSG00000030170">
    <property type="expression patterns" value="Expressed in urethra mesenchymal layer and 274 other cell types or tissues"/>
</dbReference>
<dbReference type="ExpressionAtlas" id="P22726">
    <property type="expression patterns" value="baseline and differential"/>
</dbReference>
<dbReference type="GO" id="GO:0009986">
    <property type="term" value="C:cell surface"/>
    <property type="evidence" value="ECO:0000314"/>
    <property type="project" value="BHF-UCL"/>
</dbReference>
<dbReference type="GO" id="GO:0005788">
    <property type="term" value="C:endoplasmic reticulum lumen"/>
    <property type="evidence" value="ECO:0000304"/>
    <property type="project" value="Reactome"/>
</dbReference>
<dbReference type="GO" id="GO:0031012">
    <property type="term" value="C:extracellular matrix"/>
    <property type="evidence" value="ECO:0000314"/>
    <property type="project" value="MGI"/>
</dbReference>
<dbReference type="GO" id="GO:0005576">
    <property type="term" value="C:extracellular region"/>
    <property type="evidence" value="ECO:0007669"/>
    <property type="project" value="UniProtKB-KW"/>
</dbReference>
<dbReference type="GO" id="GO:0005102">
    <property type="term" value="F:signaling receptor binding"/>
    <property type="evidence" value="ECO:0000353"/>
    <property type="project" value="ParkinsonsUK-UCL"/>
</dbReference>
<dbReference type="GO" id="GO:0009887">
    <property type="term" value="P:animal organ morphogenesis"/>
    <property type="evidence" value="ECO:0000304"/>
    <property type="project" value="MGI"/>
</dbReference>
<dbReference type="GO" id="GO:0007267">
    <property type="term" value="P:cell-cell signaling"/>
    <property type="evidence" value="ECO:0000304"/>
    <property type="project" value="MGI"/>
</dbReference>
<dbReference type="GO" id="GO:0002062">
    <property type="term" value="P:chondrocyte differentiation"/>
    <property type="evidence" value="ECO:0007669"/>
    <property type="project" value="Ensembl"/>
</dbReference>
<dbReference type="GO" id="GO:0042692">
    <property type="term" value="P:muscle cell differentiation"/>
    <property type="evidence" value="ECO:0000250"/>
    <property type="project" value="UniProtKB"/>
</dbReference>
<dbReference type="GO" id="GO:0090090">
    <property type="term" value="P:negative regulation of canonical Wnt signaling pathway"/>
    <property type="evidence" value="ECO:0000316"/>
    <property type="project" value="MGI"/>
</dbReference>
<dbReference type="GO" id="GO:0030335">
    <property type="term" value="P:positive regulation of cell migration"/>
    <property type="evidence" value="ECO:0007669"/>
    <property type="project" value="Ensembl"/>
</dbReference>
<dbReference type="GO" id="GO:1904105">
    <property type="term" value="P:positive regulation of convergent extension involved in gastrulation"/>
    <property type="evidence" value="ECO:0000250"/>
    <property type="project" value="UniProtKB"/>
</dbReference>
<dbReference type="GO" id="GO:0045600">
    <property type="term" value="P:positive regulation of fat cell differentiation"/>
    <property type="evidence" value="ECO:0000316"/>
    <property type="project" value="MGI"/>
</dbReference>
<dbReference type="GO" id="GO:2000052">
    <property type="term" value="P:positive regulation of non-canonical Wnt signaling pathway"/>
    <property type="evidence" value="ECO:0000250"/>
    <property type="project" value="UniProtKB"/>
</dbReference>
<dbReference type="GO" id="GO:0007165">
    <property type="term" value="P:signal transduction"/>
    <property type="evidence" value="ECO:0000304"/>
    <property type="project" value="MGI"/>
</dbReference>
<dbReference type="GO" id="GO:0016055">
    <property type="term" value="P:Wnt signaling pathway"/>
    <property type="evidence" value="ECO:0007669"/>
    <property type="project" value="UniProtKB-KW"/>
</dbReference>
<dbReference type="FunFam" id="3.30.2460.20:FF:000001">
    <property type="entry name" value="Wnt homolog"/>
    <property type="match status" value="1"/>
</dbReference>
<dbReference type="Gene3D" id="3.30.2460.20">
    <property type="match status" value="1"/>
</dbReference>
<dbReference type="InterPro" id="IPR005817">
    <property type="entry name" value="Wnt"/>
</dbReference>
<dbReference type="InterPro" id="IPR043158">
    <property type="entry name" value="Wnt_C"/>
</dbReference>
<dbReference type="InterPro" id="IPR018161">
    <property type="entry name" value="Wnt_CS"/>
</dbReference>
<dbReference type="PANTHER" id="PTHR12027:SF87">
    <property type="entry name" value="PROTEIN WNT-5B"/>
    <property type="match status" value="1"/>
</dbReference>
<dbReference type="PANTHER" id="PTHR12027">
    <property type="entry name" value="WNT RELATED"/>
    <property type="match status" value="1"/>
</dbReference>
<dbReference type="Pfam" id="PF00110">
    <property type="entry name" value="wnt"/>
    <property type="match status" value="1"/>
</dbReference>
<dbReference type="PRINTS" id="PR01349">
    <property type="entry name" value="WNTPROTEIN"/>
</dbReference>
<dbReference type="SMART" id="SM00097">
    <property type="entry name" value="WNT1"/>
    <property type="match status" value="1"/>
</dbReference>
<dbReference type="PROSITE" id="PS00246">
    <property type="entry name" value="WNT1"/>
    <property type="match status" value="1"/>
</dbReference>